<reference key="1">
    <citation type="journal article" date="2005" name="Science">
        <title>The genome of the African trypanosome Trypanosoma brucei.</title>
        <authorList>
            <person name="Berriman M."/>
            <person name="Ghedin E."/>
            <person name="Hertz-Fowler C."/>
            <person name="Blandin G."/>
            <person name="Renauld H."/>
            <person name="Bartholomeu D.C."/>
            <person name="Lennard N.J."/>
            <person name="Caler E."/>
            <person name="Hamlin N.E."/>
            <person name="Haas B."/>
            <person name="Bohme U."/>
            <person name="Hannick L."/>
            <person name="Aslett M.A."/>
            <person name="Shallom J."/>
            <person name="Marcello L."/>
            <person name="Hou L."/>
            <person name="Wickstead B."/>
            <person name="Alsmark U.C.M."/>
            <person name="Arrowsmith C."/>
            <person name="Atkin R.J."/>
            <person name="Barron A.J."/>
            <person name="Bringaud F."/>
            <person name="Brooks K."/>
            <person name="Carrington M."/>
            <person name="Cherevach I."/>
            <person name="Chillingworth T.J."/>
            <person name="Churcher C."/>
            <person name="Clark L.N."/>
            <person name="Corton C.H."/>
            <person name="Cronin A."/>
            <person name="Davies R.M."/>
            <person name="Doggett J."/>
            <person name="Djikeng A."/>
            <person name="Feldblyum T."/>
            <person name="Field M.C."/>
            <person name="Fraser A."/>
            <person name="Goodhead I."/>
            <person name="Hance Z."/>
            <person name="Harper D."/>
            <person name="Harris B.R."/>
            <person name="Hauser H."/>
            <person name="Hostetler J."/>
            <person name="Ivens A."/>
            <person name="Jagels K."/>
            <person name="Johnson D."/>
            <person name="Johnson J."/>
            <person name="Jones K."/>
            <person name="Kerhornou A.X."/>
            <person name="Koo H."/>
            <person name="Larke N."/>
            <person name="Landfear S."/>
            <person name="Larkin C."/>
            <person name="Leech V."/>
            <person name="Line A."/>
            <person name="Lord A."/>
            <person name="Macleod A."/>
            <person name="Mooney P.J."/>
            <person name="Moule S."/>
            <person name="Martin D.M."/>
            <person name="Morgan G.W."/>
            <person name="Mungall K."/>
            <person name="Norbertczak H."/>
            <person name="Ormond D."/>
            <person name="Pai G."/>
            <person name="Peacock C.S."/>
            <person name="Peterson J."/>
            <person name="Quail M.A."/>
            <person name="Rabbinowitsch E."/>
            <person name="Rajandream M.A."/>
            <person name="Reitter C."/>
            <person name="Salzberg S.L."/>
            <person name="Sanders M."/>
            <person name="Schobel S."/>
            <person name="Sharp S."/>
            <person name="Simmonds M."/>
            <person name="Simpson A.J."/>
            <person name="Tallon L."/>
            <person name="Turner C.M."/>
            <person name="Tait A."/>
            <person name="Tivey A.R."/>
            <person name="Van Aken S."/>
            <person name="Walker D."/>
            <person name="Wanless D."/>
            <person name="Wang S."/>
            <person name="White B."/>
            <person name="White O."/>
            <person name="Whitehead S."/>
            <person name="Woodward J."/>
            <person name="Wortman J."/>
            <person name="Adams M.D."/>
            <person name="Embley T.M."/>
            <person name="Gull K."/>
            <person name="Ullu E."/>
            <person name="Barry J.D."/>
            <person name="Fairlamb A.H."/>
            <person name="Opperdoes F."/>
            <person name="Barrell B.G."/>
            <person name="Donelson J.E."/>
            <person name="Hall N."/>
            <person name="Fraser C.M."/>
            <person name="Melville S.E."/>
            <person name="El-Sayed N.M.A."/>
        </authorList>
    </citation>
    <scope>NUCLEOTIDE SEQUENCE [LARGE SCALE GENOMIC DNA]</scope>
    <source>
        <strain evidence="6">927/4 GUTat10.1</strain>
    </source>
</reference>
<reference key="2">
    <citation type="journal article" date="2007" name="Mol. Cell. Biol.">
        <title>The 2'-O-ribose methyltransferase for cap 1 of spliced leader RNA and U1 small nuclear RNA in Trypanosoma brucei.</title>
        <authorList>
            <person name="Zamudio J.R."/>
            <person name="Mittra B."/>
            <person name="Foldynova-Trantirkova S."/>
            <person name="Zeiner G.M."/>
            <person name="Lukes J."/>
            <person name="Bujnicki J.M."/>
            <person name="Sturm N.R."/>
            <person name="Campbell D.A."/>
        </authorList>
    </citation>
    <scope>FUNCTION</scope>
    <scope>CATALYTIC ACTIVITY</scope>
    <scope>SUBCELLULAR LOCATION</scope>
</reference>
<reference key="3">
    <citation type="journal article" date="2008" name="J. Biol. Chem.">
        <title>The TbMTr1 spliced leader RNA cap 1 2'-O-ribose methyltransferase from Trypanosoma brucei acts with substrate specificity.</title>
        <authorList>
            <person name="Mittra B."/>
            <person name="Zamudio J.R."/>
            <person name="Bujnicki J.M."/>
            <person name="Stepinski J."/>
            <person name="Darzynkiewicz E."/>
            <person name="Campbell D.A."/>
            <person name="Sturm N.R."/>
        </authorList>
    </citation>
    <scope>FUNCTION</scope>
    <scope>BIOPHYSICOCHEMICAL PROPERTIES</scope>
    <scope>MUTAGENESIS OF LYS-95; ASP-207; LYS-248 AND GLU-285</scope>
    <source>
        <strain>YTAT</strain>
    </source>
</reference>
<reference key="4">
    <citation type="journal article" date="2009" name="Mol. Cell. Biol.">
        <title>Trypanosoma brucei spliced leader RNA maturation by the cap 1 2'-O-ribose methyltransferase and SLA1 H/ACA snoRNA pseudouridine synthase complex.</title>
        <authorList>
            <person name="Zamudio J.R."/>
            <person name="Mittra B."/>
            <person name="Chattopadhyay A."/>
            <person name="Wohlschlegel J.A."/>
            <person name="Sturm N.R."/>
            <person name="Campbell D.A."/>
        </authorList>
    </citation>
    <scope>IDENTIFICATION BY MASS SPECTROMETRY</scope>
    <scope>SUBUNIT</scope>
    <source>
        <strain>YTAT</strain>
    </source>
</reference>
<comment type="function">
    <text evidence="2 3">S-adenosyl-L-methionine-dependent methyltransferase that mediates RNA cap1 2'-O-ribose methylation to the 5'-cap structure of spliced leader and U1 small nuclear RNAs. Methylates the ribose of the first nucleotide of a m(7)GpppG-capped RNA to produce m(7)GpppNmp (cap1). Cap1 modification is linked to higher levels of translation. Recognizes a guanosine cap on RNA independent of its N(7) methylation status.</text>
</comment>
<comment type="catalytic activity">
    <reaction evidence="2">
        <text>a 5'-end (N(7)-methyl 5'-triphosphoguanosine)-ribonucleoside in mRNA + S-adenosyl-L-methionine = a 5'-end (N(7)-methyl 5'-triphosphoguanosine)-(2'-O-methyl-ribonucleoside) in mRNA + S-adenosyl-L-homocysteine + H(+)</text>
        <dbReference type="Rhea" id="RHEA:67020"/>
        <dbReference type="Rhea" id="RHEA-COMP:17167"/>
        <dbReference type="Rhea" id="RHEA-COMP:17168"/>
        <dbReference type="ChEBI" id="CHEBI:15378"/>
        <dbReference type="ChEBI" id="CHEBI:57856"/>
        <dbReference type="ChEBI" id="CHEBI:59789"/>
        <dbReference type="ChEBI" id="CHEBI:156461"/>
        <dbReference type="ChEBI" id="CHEBI:167609"/>
        <dbReference type="EC" id="2.1.1.57"/>
    </reaction>
</comment>
<comment type="biophysicochemical properties">
    <kinetics>
        <KM evidence="3">0.8 uM for S-adenosyl-L-methionine</KM>
    </kinetics>
    <phDependence>
        <text evidence="3">Optimum pH is 9.5.</text>
    </phDependence>
</comment>
<comment type="subunit">
    <text evidence="4">Component of a complex composed of CBF5, GAR1, NHP2, MTR1, NOP10 and Tb11.01.8210.</text>
</comment>
<comment type="subcellular location">
    <subcellularLocation>
        <location evidence="2">Nucleus</location>
    </subcellularLocation>
</comment>
<evidence type="ECO:0000255" key="1">
    <source>
        <dbReference type="PROSITE-ProRule" id="PRU00945"/>
    </source>
</evidence>
<evidence type="ECO:0000269" key="2">
    <source>
    </source>
</evidence>
<evidence type="ECO:0000269" key="3">
    <source>
    </source>
</evidence>
<evidence type="ECO:0000269" key="4">
    <source>
    </source>
</evidence>
<evidence type="ECO:0000305" key="5"/>
<evidence type="ECO:0000312" key="6">
    <source>
        <dbReference type="Proteomes" id="UP000008524"/>
    </source>
</evidence>
<gene>
    <name type="primary">MTR1</name>
    <name type="ORF">Tb10.6k15.2610</name>
</gene>
<proteinExistence type="evidence at protein level"/>
<organism>
    <name type="scientific">Trypanosoma brucei brucei (strain 927/4 GUTat10.1)</name>
    <dbReference type="NCBI Taxonomy" id="185431"/>
    <lineage>
        <taxon>Eukaryota</taxon>
        <taxon>Discoba</taxon>
        <taxon>Euglenozoa</taxon>
        <taxon>Kinetoplastea</taxon>
        <taxon>Metakinetoplastina</taxon>
        <taxon>Trypanosomatida</taxon>
        <taxon>Trypanosomatidae</taxon>
        <taxon>Trypanosoma</taxon>
    </lineage>
</organism>
<accession>Q38AH0</accession>
<name>MTR1_TRYB2</name>
<sequence>MPAVADCTVVFPLRHDPASTHPDVSGLVGKAFERVNWRDAFDTFLAEERSALWAAKTAFDNTDTSAYIAARDALFPQAVSGVHGAVAFRNRAGHKLHETMEAVGLWEYLKGGATRAKGTFTFVDVCGGPGAFSQALFAMGKEHKLRLRGFGLTLRNVKGLDWYTDLPSRSFFPCYGIDGTGDVFKLENIESLCSLTCKENVRLVVADGGFDVPTEVVNFQETISCRIVYGQWLSAVKLLRPGGCFVLKLFDCFSPFTRAILFLTTHLYESVQVVKPRHSRVVNSERYLVCIGFIGAPKQWLEHFERCYQEGFVDNDNIPTVLPTSLFSGDKIFGADVERMSATIASNQVSGLHAILEKLQSKPAMEEVKS</sequence>
<feature type="chain" id="PRO_0000399802" description="Cap-specific mRNA (nucleoside-2'-O-)-methyltransferase 1">
    <location>
        <begin position="1"/>
        <end position="370"/>
    </location>
</feature>
<feature type="domain" description="RrmJ-type SAM-dependent 2'-O-MTase" evidence="1">
    <location>
        <begin position="87"/>
        <end position="294"/>
    </location>
</feature>
<feature type="active site" description="Proton acceptor" evidence="5">
    <location>
        <position position="248"/>
    </location>
</feature>
<feature type="binding site" evidence="1">
    <location>
        <position position="130"/>
    </location>
    <ligand>
        <name>S-adenosyl-L-methionine</name>
        <dbReference type="ChEBI" id="CHEBI:59789"/>
    </ligand>
</feature>
<feature type="binding site" evidence="5">
    <location>
        <position position="207"/>
    </location>
    <ligand>
        <name>S-adenosyl-L-methionine</name>
        <dbReference type="ChEBI" id="CHEBI:59789"/>
    </ligand>
</feature>
<feature type="mutagenesis site" description="98% reduction of activity." evidence="3">
    <original>K</original>
    <variation>A</variation>
    <location>
        <position position="95"/>
    </location>
</feature>
<feature type="mutagenesis site" description="96% reduction of activity." evidence="3">
    <original>D</original>
    <variation>A</variation>
    <location>
        <position position="207"/>
    </location>
</feature>
<feature type="mutagenesis site" description="98% reduction of activity." evidence="3">
    <original>K</original>
    <variation>A</variation>
    <location>
        <position position="248"/>
    </location>
</feature>
<feature type="mutagenesis site" description="93% reduction of activity." evidence="3">
    <original>E</original>
    <variation>A</variation>
    <location>
        <position position="285"/>
    </location>
</feature>
<keyword id="KW-0489">Methyltransferase</keyword>
<keyword id="KW-0506">mRNA capping</keyword>
<keyword id="KW-0507">mRNA processing</keyword>
<keyword id="KW-0539">Nucleus</keyword>
<keyword id="KW-1185">Reference proteome</keyword>
<keyword id="KW-0949">S-adenosyl-L-methionine</keyword>
<keyword id="KW-0808">Transferase</keyword>
<dbReference type="EC" id="2.1.1.57" evidence="2"/>
<dbReference type="EMBL" id="CM000208">
    <property type="protein sequence ID" value="EAN78200.1"/>
    <property type="molecule type" value="Genomic_DNA"/>
</dbReference>
<dbReference type="RefSeq" id="XP_823028.1">
    <property type="nucleotide sequence ID" value="XM_817935.1"/>
</dbReference>
<dbReference type="SMR" id="Q38AH0"/>
<dbReference type="STRING" id="185431.Q38AH0"/>
<dbReference type="PaxDb" id="5691-EAN78200"/>
<dbReference type="GeneID" id="3662615"/>
<dbReference type="KEGG" id="tbr:Tb10.6k15.2610"/>
<dbReference type="VEuPathDB" id="TriTrypDB:Tb927.10.7940"/>
<dbReference type="eggNOG" id="KOG3673">
    <property type="taxonomic scope" value="Eukaryota"/>
</dbReference>
<dbReference type="InParanoid" id="Q38AH0"/>
<dbReference type="OMA" id="ESTGVWM"/>
<dbReference type="OrthoDB" id="10251234at2759"/>
<dbReference type="Proteomes" id="UP000008524">
    <property type="component" value="Chromosome 10"/>
</dbReference>
<dbReference type="GO" id="GO:0005654">
    <property type="term" value="C:nucleoplasm"/>
    <property type="evidence" value="ECO:0000314"/>
    <property type="project" value="GeneDB"/>
</dbReference>
<dbReference type="GO" id="GO:0005634">
    <property type="term" value="C:nucleus"/>
    <property type="evidence" value="ECO:0000314"/>
    <property type="project" value="UniProtKB"/>
</dbReference>
<dbReference type="GO" id="GO:0004483">
    <property type="term" value="F:mRNA (nucleoside-2'-O-)-methyltransferase activity"/>
    <property type="evidence" value="ECO:0000314"/>
    <property type="project" value="UniProtKB"/>
</dbReference>
<dbReference type="GO" id="GO:0008649">
    <property type="term" value="F:rRNA methyltransferase activity"/>
    <property type="evidence" value="ECO:0000255"/>
    <property type="project" value="GeneDB"/>
</dbReference>
<dbReference type="GO" id="GO:0006370">
    <property type="term" value="P:7-methylguanosine mRNA capping"/>
    <property type="evidence" value="ECO:0000315"/>
    <property type="project" value="UniProtKB"/>
</dbReference>
<dbReference type="GO" id="GO:0016556">
    <property type="term" value="P:mRNA modification"/>
    <property type="evidence" value="ECO:0000314"/>
    <property type="project" value="UniProtKB"/>
</dbReference>
<dbReference type="GO" id="GO:0001510">
    <property type="term" value="P:RNA methylation"/>
    <property type="evidence" value="ECO:0000255"/>
    <property type="project" value="GeneDB"/>
</dbReference>
<dbReference type="FunFam" id="3.40.50.12760:FF:000005">
    <property type="entry name" value="Methyltransferase, putative"/>
    <property type="match status" value="1"/>
</dbReference>
<dbReference type="Gene3D" id="3.40.50.12760">
    <property type="match status" value="1"/>
</dbReference>
<dbReference type="InterPro" id="IPR050851">
    <property type="entry name" value="mRNA_Cap_2O-Ribose_MeTrfase"/>
</dbReference>
<dbReference type="InterPro" id="IPR002877">
    <property type="entry name" value="RNA_MeTrfase_FtsJ_dom"/>
</dbReference>
<dbReference type="InterPro" id="IPR025816">
    <property type="entry name" value="RrmJ-type_MeTrfase"/>
</dbReference>
<dbReference type="InterPro" id="IPR029063">
    <property type="entry name" value="SAM-dependent_MTases_sf"/>
</dbReference>
<dbReference type="PANTHER" id="PTHR16121:SF0">
    <property type="entry name" value="CAP-SPECIFIC MRNA (NUCLEOSIDE-2'-O-)-METHYLTRANSFERASE 1"/>
    <property type="match status" value="1"/>
</dbReference>
<dbReference type="PANTHER" id="PTHR16121">
    <property type="entry name" value="CAP-SPECIFIC MRNA (NUCLEOSIDE-2'-O-)-METHYLTRANSFERASE 1-RELATED"/>
    <property type="match status" value="1"/>
</dbReference>
<dbReference type="Pfam" id="PF01728">
    <property type="entry name" value="FtsJ"/>
    <property type="match status" value="1"/>
</dbReference>
<dbReference type="SUPFAM" id="SSF53335">
    <property type="entry name" value="S-adenosyl-L-methionine-dependent methyltransferases"/>
    <property type="match status" value="1"/>
</dbReference>
<dbReference type="PROSITE" id="PS51613">
    <property type="entry name" value="SAM_MT_RRMJ"/>
    <property type="match status" value="1"/>
</dbReference>
<protein>
    <recommendedName>
        <fullName>Cap-specific mRNA (nucleoside-2'-O-)-methyltransferase 1</fullName>
        <ecNumber evidence="2">2.1.1.57</ecNumber>
    </recommendedName>
    <alternativeName>
        <fullName>Cap1 2'O-ribose methyltransferase 1</fullName>
        <shortName>MTr1</shortName>
        <shortName>TbMTr1</shortName>
    </alternativeName>
</protein>